<proteinExistence type="inferred from homology"/>
<name>RECF_DEIDV</name>
<feature type="chain" id="PRO_1000205479" description="DNA replication and repair protein RecF">
    <location>
        <begin position="1"/>
        <end position="360"/>
    </location>
</feature>
<feature type="binding site" evidence="1">
    <location>
        <begin position="30"/>
        <end position="37"/>
    </location>
    <ligand>
        <name>ATP</name>
        <dbReference type="ChEBI" id="CHEBI:30616"/>
    </ligand>
</feature>
<organism>
    <name type="scientific">Deinococcus deserti (strain DSM 17065 / CIP 109153 / LMG 22923 / VCD115)</name>
    <dbReference type="NCBI Taxonomy" id="546414"/>
    <lineage>
        <taxon>Bacteria</taxon>
        <taxon>Thermotogati</taxon>
        <taxon>Deinococcota</taxon>
        <taxon>Deinococci</taxon>
        <taxon>Deinococcales</taxon>
        <taxon>Deinococcaceae</taxon>
        <taxon>Deinococcus</taxon>
    </lineage>
</organism>
<accession>C1CW06</accession>
<keyword id="KW-0067">ATP-binding</keyword>
<keyword id="KW-0963">Cytoplasm</keyword>
<keyword id="KW-0227">DNA damage</keyword>
<keyword id="KW-0234">DNA repair</keyword>
<keyword id="KW-0235">DNA replication</keyword>
<keyword id="KW-0238">DNA-binding</keyword>
<keyword id="KW-0547">Nucleotide-binding</keyword>
<keyword id="KW-1185">Reference proteome</keyword>
<keyword id="KW-0742">SOS response</keyword>
<reference key="1">
    <citation type="journal article" date="2009" name="PLoS Genet.">
        <title>Alliance of proteomics and genomics to unravel the specificities of Sahara bacterium Deinococcus deserti.</title>
        <authorList>
            <person name="de Groot A."/>
            <person name="Dulermo R."/>
            <person name="Ortet P."/>
            <person name="Blanchard L."/>
            <person name="Guerin P."/>
            <person name="Fernandez B."/>
            <person name="Vacherie B."/>
            <person name="Dossat C."/>
            <person name="Jolivet E."/>
            <person name="Siguier P."/>
            <person name="Chandler M."/>
            <person name="Barakat M."/>
            <person name="Dedieu A."/>
            <person name="Barbe V."/>
            <person name="Heulin T."/>
            <person name="Sommer S."/>
            <person name="Achouak W."/>
            <person name="Armengaud J."/>
        </authorList>
    </citation>
    <scope>NUCLEOTIDE SEQUENCE [LARGE SCALE GENOMIC DNA]</scope>
    <source>
        <strain>DSM 17065 / CIP 109153 / LMG 22923 / VCD115</strain>
    </source>
</reference>
<evidence type="ECO:0000255" key="1">
    <source>
        <dbReference type="HAMAP-Rule" id="MF_00365"/>
    </source>
</evidence>
<sequence>MQLESLSTLNYRNLAPCTLSFPAGVTGVFGENGAGKTNLLEAAYLALTGLTDVTRLEQLVQSGEGEAYVRADLESGGSLSIQEVGLGRGRRQLKVDGVRVRAGDLPRGSAVWIRPEDSELVFGSPSGRRNFLDALLSRLSARYAQQLARYDRTVSQRNAALRSGEEWAMHVWDDALVKLGSDIMLFRRRALTRLSELAAEANEALGSRKPLVLGLSESTTPETYAHDLRSRRAEELARGSTATGPHRDDLTMTLGDFPATEYASRGEGRTIALALRRAELELLAERFGEKPVLLIDDFSAELDPTRRAFLLDLAASVPQAIVTGTEQAPGAALTLRAHAGRFTPEPEPVSAQVAVDEVGA</sequence>
<gene>
    <name evidence="1" type="primary">recF</name>
    <name type="ordered locus">Deide_14250</name>
</gene>
<dbReference type="EMBL" id="CP001114">
    <property type="protein sequence ID" value="ACO46373.2"/>
    <property type="molecule type" value="Genomic_DNA"/>
</dbReference>
<dbReference type="SMR" id="C1CW06"/>
<dbReference type="STRING" id="546414.Deide_14250"/>
<dbReference type="PaxDb" id="546414-Deide_14250"/>
<dbReference type="KEGG" id="ddr:Deide_14250"/>
<dbReference type="eggNOG" id="COG1195">
    <property type="taxonomic scope" value="Bacteria"/>
</dbReference>
<dbReference type="HOGENOM" id="CLU_040267_0_1_0"/>
<dbReference type="Proteomes" id="UP000002208">
    <property type="component" value="Chromosome"/>
</dbReference>
<dbReference type="GO" id="GO:0005737">
    <property type="term" value="C:cytoplasm"/>
    <property type="evidence" value="ECO:0007669"/>
    <property type="project" value="UniProtKB-SubCell"/>
</dbReference>
<dbReference type="GO" id="GO:0005524">
    <property type="term" value="F:ATP binding"/>
    <property type="evidence" value="ECO:0007669"/>
    <property type="project" value="UniProtKB-UniRule"/>
</dbReference>
<dbReference type="GO" id="GO:0003697">
    <property type="term" value="F:single-stranded DNA binding"/>
    <property type="evidence" value="ECO:0007669"/>
    <property type="project" value="UniProtKB-UniRule"/>
</dbReference>
<dbReference type="GO" id="GO:0006260">
    <property type="term" value="P:DNA replication"/>
    <property type="evidence" value="ECO:0007669"/>
    <property type="project" value="UniProtKB-UniRule"/>
</dbReference>
<dbReference type="GO" id="GO:0000731">
    <property type="term" value="P:DNA synthesis involved in DNA repair"/>
    <property type="evidence" value="ECO:0007669"/>
    <property type="project" value="TreeGrafter"/>
</dbReference>
<dbReference type="GO" id="GO:0006302">
    <property type="term" value="P:double-strand break repair"/>
    <property type="evidence" value="ECO:0007669"/>
    <property type="project" value="TreeGrafter"/>
</dbReference>
<dbReference type="GO" id="GO:0009432">
    <property type="term" value="P:SOS response"/>
    <property type="evidence" value="ECO:0007669"/>
    <property type="project" value="UniProtKB-UniRule"/>
</dbReference>
<dbReference type="CDD" id="cd03242">
    <property type="entry name" value="ABC_RecF"/>
    <property type="match status" value="1"/>
</dbReference>
<dbReference type="Gene3D" id="3.40.50.300">
    <property type="entry name" value="P-loop containing nucleotide triphosphate hydrolases"/>
    <property type="match status" value="1"/>
</dbReference>
<dbReference type="Gene3D" id="1.20.1050.90">
    <property type="entry name" value="RecF/RecN/SMC, N-terminal domain"/>
    <property type="match status" value="1"/>
</dbReference>
<dbReference type="HAMAP" id="MF_00365">
    <property type="entry name" value="RecF"/>
    <property type="match status" value="1"/>
</dbReference>
<dbReference type="InterPro" id="IPR001238">
    <property type="entry name" value="DNA-binding_RecF"/>
</dbReference>
<dbReference type="InterPro" id="IPR018078">
    <property type="entry name" value="DNA-binding_RecF_CS"/>
</dbReference>
<dbReference type="InterPro" id="IPR027417">
    <property type="entry name" value="P-loop_NTPase"/>
</dbReference>
<dbReference type="InterPro" id="IPR003395">
    <property type="entry name" value="RecF/RecN/SMC_N"/>
</dbReference>
<dbReference type="InterPro" id="IPR042174">
    <property type="entry name" value="RecF_2"/>
</dbReference>
<dbReference type="NCBIfam" id="NF010680">
    <property type="entry name" value="PRK14079.1"/>
    <property type="match status" value="1"/>
</dbReference>
<dbReference type="NCBIfam" id="TIGR00611">
    <property type="entry name" value="recf"/>
    <property type="match status" value="1"/>
</dbReference>
<dbReference type="PANTHER" id="PTHR32182">
    <property type="entry name" value="DNA REPLICATION AND REPAIR PROTEIN RECF"/>
    <property type="match status" value="1"/>
</dbReference>
<dbReference type="PANTHER" id="PTHR32182:SF0">
    <property type="entry name" value="DNA REPLICATION AND REPAIR PROTEIN RECF"/>
    <property type="match status" value="1"/>
</dbReference>
<dbReference type="Pfam" id="PF02463">
    <property type="entry name" value="SMC_N"/>
    <property type="match status" value="1"/>
</dbReference>
<dbReference type="SUPFAM" id="SSF52540">
    <property type="entry name" value="P-loop containing nucleoside triphosphate hydrolases"/>
    <property type="match status" value="1"/>
</dbReference>
<dbReference type="PROSITE" id="PS00617">
    <property type="entry name" value="RECF_1"/>
    <property type="match status" value="1"/>
</dbReference>
<dbReference type="PROSITE" id="PS00618">
    <property type="entry name" value="RECF_2"/>
    <property type="match status" value="1"/>
</dbReference>
<protein>
    <recommendedName>
        <fullName evidence="1">DNA replication and repair protein RecF</fullName>
    </recommendedName>
</protein>
<comment type="function">
    <text evidence="1">The RecF protein is involved in DNA metabolism; it is required for DNA replication and normal SOS inducibility. RecF binds preferentially to single-stranded, linear DNA. It also seems to bind ATP.</text>
</comment>
<comment type="subcellular location">
    <subcellularLocation>
        <location evidence="1">Cytoplasm</location>
    </subcellularLocation>
</comment>
<comment type="similarity">
    <text evidence="1">Belongs to the RecF family.</text>
</comment>